<comment type="function">
    <text evidence="1">In the presence of manganese, represses expression of mntH and mntS. Up-regulates expression of mntP (By similarity).</text>
</comment>
<comment type="subunit">
    <text evidence="1">Homodimer.</text>
</comment>
<comment type="subcellular location">
    <subcellularLocation>
        <location evidence="1">Cytoplasm</location>
    </subcellularLocation>
</comment>
<comment type="domain">
    <text evidence="1">It contains an N-terminal DNA-binding domain and a metal-binding domain.</text>
</comment>
<comment type="similarity">
    <text evidence="3">Belongs to the DtxR/MntR family.</text>
</comment>
<dbReference type="EMBL" id="AE006468">
    <property type="protein sequence ID" value="AAL19771.1"/>
    <property type="molecule type" value="Genomic_DNA"/>
</dbReference>
<dbReference type="RefSeq" id="NP_459812.1">
    <property type="nucleotide sequence ID" value="NC_003197.2"/>
</dbReference>
<dbReference type="RefSeq" id="WP_000533542.1">
    <property type="nucleotide sequence ID" value="NC_003197.2"/>
</dbReference>
<dbReference type="SMR" id="P67710"/>
<dbReference type="STRING" id="99287.STM0835"/>
<dbReference type="PaxDb" id="99287-STM0835"/>
<dbReference type="GeneID" id="1252354"/>
<dbReference type="KEGG" id="stm:STM0835"/>
<dbReference type="PATRIC" id="fig|99287.12.peg.872"/>
<dbReference type="HOGENOM" id="CLU_069532_2_0_6"/>
<dbReference type="OMA" id="SWDAIDR"/>
<dbReference type="PhylomeDB" id="P67710"/>
<dbReference type="BioCyc" id="SENT99287:STM0835-MONOMER"/>
<dbReference type="Proteomes" id="UP000001014">
    <property type="component" value="Chromosome"/>
</dbReference>
<dbReference type="GO" id="GO:0005737">
    <property type="term" value="C:cytoplasm"/>
    <property type="evidence" value="ECO:0007669"/>
    <property type="project" value="UniProtKB-SubCell"/>
</dbReference>
<dbReference type="GO" id="GO:0003677">
    <property type="term" value="F:DNA binding"/>
    <property type="evidence" value="ECO:0007669"/>
    <property type="project" value="UniProtKB-KW"/>
</dbReference>
<dbReference type="GO" id="GO:0003700">
    <property type="term" value="F:DNA-binding transcription factor activity"/>
    <property type="evidence" value="ECO:0007669"/>
    <property type="project" value="InterPro"/>
</dbReference>
<dbReference type="GO" id="GO:0046983">
    <property type="term" value="F:protein dimerization activity"/>
    <property type="evidence" value="ECO:0007669"/>
    <property type="project" value="InterPro"/>
</dbReference>
<dbReference type="GO" id="GO:0046914">
    <property type="term" value="F:transition metal ion binding"/>
    <property type="evidence" value="ECO:0007669"/>
    <property type="project" value="InterPro"/>
</dbReference>
<dbReference type="FunFam" id="1.10.10.10:FF:000108">
    <property type="entry name" value="Mn-dependent transcriptional regulator MntR"/>
    <property type="match status" value="1"/>
</dbReference>
<dbReference type="FunFam" id="1.10.60.10:FF:000002">
    <property type="entry name" value="Mn-dependent transcriptional regulator MntR"/>
    <property type="match status" value="1"/>
</dbReference>
<dbReference type="Gene3D" id="1.10.60.10">
    <property type="entry name" value="Iron dependent repressor, metal binding and dimerisation domain"/>
    <property type="match status" value="1"/>
</dbReference>
<dbReference type="Gene3D" id="1.10.10.10">
    <property type="entry name" value="Winged helix-like DNA-binding domain superfamily/Winged helix DNA-binding domain"/>
    <property type="match status" value="1"/>
</dbReference>
<dbReference type="InterPro" id="IPR050536">
    <property type="entry name" value="DtxR_MntR_Metal-Reg"/>
</dbReference>
<dbReference type="InterPro" id="IPR001367">
    <property type="entry name" value="Fe_dep_repressor"/>
</dbReference>
<dbReference type="InterPro" id="IPR036421">
    <property type="entry name" value="Fe_dep_repressor_sf"/>
</dbReference>
<dbReference type="InterPro" id="IPR022687">
    <property type="entry name" value="HTH_DTXR"/>
</dbReference>
<dbReference type="InterPro" id="IPR022689">
    <property type="entry name" value="Iron_dep_repressor"/>
</dbReference>
<dbReference type="InterPro" id="IPR036388">
    <property type="entry name" value="WH-like_DNA-bd_sf"/>
</dbReference>
<dbReference type="InterPro" id="IPR036390">
    <property type="entry name" value="WH_DNA-bd_sf"/>
</dbReference>
<dbReference type="NCBIfam" id="NF008273">
    <property type="entry name" value="PRK11050.1"/>
    <property type="match status" value="1"/>
</dbReference>
<dbReference type="PANTHER" id="PTHR33238">
    <property type="entry name" value="IRON (METAL) DEPENDENT REPRESSOR, DTXR FAMILY"/>
    <property type="match status" value="1"/>
</dbReference>
<dbReference type="PANTHER" id="PTHR33238:SF11">
    <property type="entry name" value="TRANSCRIPTIONAL REGULATOR MNTR"/>
    <property type="match status" value="1"/>
</dbReference>
<dbReference type="Pfam" id="PF02742">
    <property type="entry name" value="Fe_dep_repr_C"/>
    <property type="match status" value="1"/>
</dbReference>
<dbReference type="Pfam" id="PF01325">
    <property type="entry name" value="Fe_dep_repress"/>
    <property type="match status" value="1"/>
</dbReference>
<dbReference type="SMART" id="SM00529">
    <property type="entry name" value="HTH_DTXR"/>
    <property type="match status" value="1"/>
</dbReference>
<dbReference type="SUPFAM" id="SSF47979">
    <property type="entry name" value="Iron-dependent repressor protein, dimerization domain"/>
    <property type="match status" value="1"/>
</dbReference>
<dbReference type="SUPFAM" id="SSF46785">
    <property type="entry name" value="Winged helix' DNA-binding domain"/>
    <property type="match status" value="1"/>
</dbReference>
<dbReference type="PROSITE" id="PS50944">
    <property type="entry name" value="HTH_DTXR"/>
    <property type="match status" value="1"/>
</dbReference>
<proteinExistence type="inferred from homology"/>
<evidence type="ECO:0000250" key="1"/>
<evidence type="ECO:0000255" key="2">
    <source>
        <dbReference type="PROSITE-ProRule" id="PRU00296"/>
    </source>
</evidence>
<evidence type="ECO:0000305" key="3"/>
<name>MNTR_SALTY</name>
<sequence>MGRRAGTPTTKKVTQLVNVEEHVEGFRQVREAHRRELIDDYVELISDLIIEVGEARQVDMAARLGVSQPTVAKMLKRLASLGFIQMIPWRGVFLTPEGEKLAQESRERHQIVENFLLVLGVSPEIARRDAEGMEHHVSQETLDAFLAFTQQHGTSAE</sequence>
<feature type="chain" id="PRO_0000201113" description="Transcriptional regulator MntR">
    <location>
        <begin position="1"/>
        <end position="157"/>
    </location>
</feature>
<feature type="domain" description="HTH dtxR-type" evidence="2">
    <location>
        <begin position="34"/>
        <end position="95"/>
    </location>
</feature>
<organism>
    <name type="scientific">Salmonella typhimurium (strain LT2 / SGSC1412 / ATCC 700720)</name>
    <dbReference type="NCBI Taxonomy" id="99287"/>
    <lineage>
        <taxon>Bacteria</taxon>
        <taxon>Pseudomonadati</taxon>
        <taxon>Pseudomonadota</taxon>
        <taxon>Gammaproteobacteria</taxon>
        <taxon>Enterobacterales</taxon>
        <taxon>Enterobacteriaceae</taxon>
        <taxon>Salmonella</taxon>
    </lineage>
</organism>
<gene>
    <name type="primary">mntR</name>
    <name type="ordered locus">STM0835</name>
</gene>
<accession>P67710</accession>
<accession>Q8XH22</accession>
<keyword id="KW-0010">Activator</keyword>
<keyword id="KW-0963">Cytoplasm</keyword>
<keyword id="KW-0238">DNA-binding</keyword>
<keyword id="KW-0464">Manganese</keyword>
<keyword id="KW-1185">Reference proteome</keyword>
<keyword id="KW-0678">Repressor</keyword>
<keyword id="KW-0804">Transcription</keyword>
<keyword id="KW-0805">Transcription regulation</keyword>
<reference key="1">
    <citation type="journal article" date="2001" name="Nature">
        <title>Complete genome sequence of Salmonella enterica serovar Typhimurium LT2.</title>
        <authorList>
            <person name="McClelland M."/>
            <person name="Sanderson K.E."/>
            <person name="Spieth J."/>
            <person name="Clifton S.W."/>
            <person name="Latreille P."/>
            <person name="Courtney L."/>
            <person name="Porwollik S."/>
            <person name="Ali J."/>
            <person name="Dante M."/>
            <person name="Du F."/>
            <person name="Hou S."/>
            <person name="Layman D."/>
            <person name="Leonard S."/>
            <person name="Nguyen C."/>
            <person name="Scott K."/>
            <person name="Holmes A."/>
            <person name="Grewal N."/>
            <person name="Mulvaney E."/>
            <person name="Ryan E."/>
            <person name="Sun H."/>
            <person name="Florea L."/>
            <person name="Miller W."/>
            <person name="Stoneking T."/>
            <person name="Nhan M."/>
            <person name="Waterston R."/>
            <person name="Wilson R.K."/>
        </authorList>
    </citation>
    <scope>NUCLEOTIDE SEQUENCE [LARGE SCALE GENOMIC DNA]</scope>
    <source>
        <strain>LT2 / SGSC1412 / ATCC 700720</strain>
    </source>
</reference>
<protein>
    <recommendedName>
        <fullName>Transcriptional regulator MntR</fullName>
    </recommendedName>
    <alternativeName>
        <fullName>Manganese transport regulator</fullName>
    </alternativeName>
</protein>